<protein>
    <recommendedName>
        <fullName evidence="1">Small ribosomal subunit protein uS17</fullName>
    </recommendedName>
    <alternativeName>
        <fullName evidence="2">30S ribosomal protein S17</fullName>
    </alternativeName>
</protein>
<organism>
    <name type="scientific">Ehrlichia ruminantium (strain Gardel)</name>
    <dbReference type="NCBI Taxonomy" id="302409"/>
    <lineage>
        <taxon>Bacteria</taxon>
        <taxon>Pseudomonadati</taxon>
        <taxon>Pseudomonadota</taxon>
        <taxon>Alphaproteobacteria</taxon>
        <taxon>Rickettsiales</taxon>
        <taxon>Anaplasmataceae</taxon>
        <taxon>Ehrlichia</taxon>
    </lineage>
</organism>
<evidence type="ECO:0000255" key="1">
    <source>
        <dbReference type="HAMAP-Rule" id="MF_01345"/>
    </source>
</evidence>
<evidence type="ECO:0000305" key="2"/>
<keyword id="KW-0687">Ribonucleoprotein</keyword>
<keyword id="KW-0689">Ribosomal protein</keyword>
<keyword id="KW-0694">RNA-binding</keyword>
<keyword id="KW-0699">rRNA-binding</keyword>
<comment type="function">
    <text evidence="1">One of the primary rRNA binding proteins, it binds specifically to the 5'-end of 16S ribosomal RNA.</text>
</comment>
<comment type="subunit">
    <text evidence="1">Part of the 30S ribosomal subunit.</text>
</comment>
<comment type="similarity">
    <text evidence="1">Belongs to the universal ribosomal protein uS17 family.</text>
</comment>
<proteinExistence type="inferred from homology"/>
<reference key="1">
    <citation type="journal article" date="2006" name="J. Bacteriol.">
        <title>Comparative genomic analysis of three strains of Ehrlichia ruminantium reveals an active process of genome size plasticity.</title>
        <authorList>
            <person name="Frutos R."/>
            <person name="Viari A."/>
            <person name="Ferraz C."/>
            <person name="Morgat A."/>
            <person name="Eychenie S."/>
            <person name="Kandassamy Y."/>
            <person name="Chantal I."/>
            <person name="Bensaid A."/>
            <person name="Coissac E."/>
            <person name="Vachiery N."/>
            <person name="Demaille J."/>
            <person name="Martinez D."/>
        </authorList>
    </citation>
    <scope>NUCLEOTIDE SEQUENCE [LARGE SCALE GENOMIC DNA]</scope>
    <source>
        <strain>Gardel</strain>
    </source>
</reference>
<dbReference type="EMBL" id="CR925677">
    <property type="protein sequence ID" value="CAI28072.1"/>
    <property type="molecule type" value="Genomic_DNA"/>
</dbReference>
<dbReference type="RefSeq" id="WP_011255720.1">
    <property type="nucleotide sequence ID" value="NC_006831.1"/>
</dbReference>
<dbReference type="SMR" id="Q5FFU9"/>
<dbReference type="GeneID" id="33057925"/>
<dbReference type="KEGG" id="erg:ERGA_CDS_06200"/>
<dbReference type="HOGENOM" id="CLU_073626_1_1_5"/>
<dbReference type="OrthoDB" id="9811714at2"/>
<dbReference type="Proteomes" id="UP000000533">
    <property type="component" value="Chromosome"/>
</dbReference>
<dbReference type="GO" id="GO:0022627">
    <property type="term" value="C:cytosolic small ribosomal subunit"/>
    <property type="evidence" value="ECO:0007669"/>
    <property type="project" value="TreeGrafter"/>
</dbReference>
<dbReference type="GO" id="GO:0019843">
    <property type="term" value="F:rRNA binding"/>
    <property type="evidence" value="ECO:0007669"/>
    <property type="project" value="UniProtKB-UniRule"/>
</dbReference>
<dbReference type="GO" id="GO:0003735">
    <property type="term" value="F:structural constituent of ribosome"/>
    <property type="evidence" value="ECO:0007669"/>
    <property type="project" value="InterPro"/>
</dbReference>
<dbReference type="GO" id="GO:0006412">
    <property type="term" value="P:translation"/>
    <property type="evidence" value="ECO:0007669"/>
    <property type="project" value="UniProtKB-UniRule"/>
</dbReference>
<dbReference type="CDD" id="cd00364">
    <property type="entry name" value="Ribosomal_uS17"/>
    <property type="match status" value="1"/>
</dbReference>
<dbReference type="Gene3D" id="2.40.50.140">
    <property type="entry name" value="Nucleic acid-binding proteins"/>
    <property type="match status" value="1"/>
</dbReference>
<dbReference type="HAMAP" id="MF_01345_B">
    <property type="entry name" value="Ribosomal_uS17_B"/>
    <property type="match status" value="1"/>
</dbReference>
<dbReference type="InterPro" id="IPR012340">
    <property type="entry name" value="NA-bd_OB-fold"/>
</dbReference>
<dbReference type="InterPro" id="IPR000266">
    <property type="entry name" value="Ribosomal_uS17"/>
</dbReference>
<dbReference type="InterPro" id="IPR019984">
    <property type="entry name" value="Ribosomal_uS17_bact/chlr"/>
</dbReference>
<dbReference type="NCBIfam" id="NF004123">
    <property type="entry name" value="PRK05610.1"/>
    <property type="match status" value="1"/>
</dbReference>
<dbReference type="NCBIfam" id="TIGR03635">
    <property type="entry name" value="uS17_bact"/>
    <property type="match status" value="1"/>
</dbReference>
<dbReference type="PANTHER" id="PTHR10744">
    <property type="entry name" value="40S RIBOSOMAL PROTEIN S11 FAMILY MEMBER"/>
    <property type="match status" value="1"/>
</dbReference>
<dbReference type="PANTHER" id="PTHR10744:SF1">
    <property type="entry name" value="SMALL RIBOSOMAL SUBUNIT PROTEIN US17M"/>
    <property type="match status" value="1"/>
</dbReference>
<dbReference type="Pfam" id="PF00366">
    <property type="entry name" value="Ribosomal_S17"/>
    <property type="match status" value="1"/>
</dbReference>
<dbReference type="PRINTS" id="PR00973">
    <property type="entry name" value="RIBOSOMALS17"/>
</dbReference>
<dbReference type="SUPFAM" id="SSF50249">
    <property type="entry name" value="Nucleic acid-binding proteins"/>
    <property type="match status" value="1"/>
</dbReference>
<feature type="chain" id="PRO_0000255674" description="Small ribosomal subunit protein uS17">
    <location>
        <begin position="1"/>
        <end position="82"/>
    </location>
</feature>
<sequence length="82" mass="9724">MKERMRSRMSKQVLTGVVVGAKCDKTIKVMVSRMVSHKMYKKIVKKRKNYVVHDEYNRYKCGDVVQIREHIPISATKRWVVI</sequence>
<accession>Q5FFU9</accession>
<name>RS17_EHRRG</name>
<gene>
    <name evidence="1" type="primary">rpsQ</name>
    <name type="ordered locus">ERGA_CDS_06200</name>
</gene>